<evidence type="ECO:0000255" key="1">
    <source>
        <dbReference type="HAMAP-Rule" id="MF_00318"/>
    </source>
</evidence>
<proteinExistence type="inferred from homology"/>
<comment type="function">
    <text evidence="1">Catalyzes the reversible conversion of 2-phosphoglycerate (2-PG) into phosphoenolpyruvate (PEP). It is essential for the degradation of carbohydrates via glycolysis.</text>
</comment>
<comment type="catalytic activity">
    <reaction evidence="1">
        <text>(2R)-2-phosphoglycerate = phosphoenolpyruvate + H2O</text>
        <dbReference type="Rhea" id="RHEA:10164"/>
        <dbReference type="ChEBI" id="CHEBI:15377"/>
        <dbReference type="ChEBI" id="CHEBI:58289"/>
        <dbReference type="ChEBI" id="CHEBI:58702"/>
        <dbReference type="EC" id="4.2.1.11"/>
    </reaction>
</comment>
<comment type="cofactor">
    <cofactor evidence="1">
        <name>Mg(2+)</name>
        <dbReference type="ChEBI" id="CHEBI:18420"/>
    </cofactor>
    <text evidence="1">Binds a second Mg(2+) ion via substrate during catalysis.</text>
</comment>
<comment type="pathway">
    <text evidence="1">Carbohydrate degradation; glycolysis; pyruvate from D-glyceraldehyde 3-phosphate: step 4/5.</text>
</comment>
<comment type="subcellular location">
    <subcellularLocation>
        <location evidence="1">Cytoplasm</location>
    </subcellularLocation>
    <subcellularLocation>
        <location evidence="1">Secreted</location>
    </subcellularLocation>
    <subcellularLocation>
        <location evidence="1">Cell surface</location>
    </subcellularLocation>
    <text evidence="1">Fractions of enolase are present in both the cytoplasm and on the cell surface.</text>
</comment>
<comment type="similarity">
    <text evidence="1">Belongs to the enolase family.</text>
</comment>
<organism>
    <name type="scientific">Methylorubrum extorquens (strain PA1)</name>
    <name type="common">Methylobacterium extorquens</name>
    <dbReference type="NCBI Taxonomy" id="419610"/>
    <lineage>
        <taxon>Bacteria</taxon>
        <taxon>Pseudomonadati</taxon>
        <taxon>Pseudomonadota</taxon>
        <taxon>Alphaproteobacteria</taxon>
        <taxon>Hyphomicrobiales</taxon>
        <taxon>Methylobacteriaceae</taxon>
        <taxon>Methylorubrum</taxon>
    </lineage>
</organism>
<sequence length="429" mass="45179">MTAITNIAAREILDSRGNPTVEVDVLLEDGSFGRAAVPSGASTGAHEAVELRDGDKSRYNGKGVLKAVDAVQSEILDAIGGMDAEDQVAVDEAMIALDGTPNKARLGANAILGVSLAVAKAAAETAGLPLYRYVGGVQGRVLPVPMMNIVNGGAHADNPIDFQEFMVMPVGATSLSDAVRMGAEIFHTLKSALKKAGHNTNVGDEGGFAPNLPSAEAALDFVMESINAAGFKPGSDVVLALDCAATEFFKDGAYRYEGEGQTRSIEQQVDYLAKLTEAYPILSIEDGMSEDDWEGWKLLTDRIGSRVQLVGDDLFVTNVERLARGIETGTANSILVKVNQIGSLTETLAAVDMAQRAGYTAVMSHRSGETEDSTIADLAVATNCGQIKTGSLARSDRLAKYNQLIRIEEGLGAQALYAGRSAIRQLAGR</sequence>
<keyword id="KW-0963">Cytoplasm</keyword>
<keyword id="KW-0324">Glycolysis</keyword>
<keyword id="KW-0456">Lyase</keyword>
<keyword id="KW-0460">Magnesium</keyword>
<keyword id="KW-0479">Metal-binding</keyword>
<keyword id="KW-0964">Secreted</keyword>
<reference key="1">
    <citation type="submission" date="2007-12" db="EMBL/GenBank/DDBJ databases">
        <title>Complete sequence of Methylobacterium extorquens PA1.</title>
        <authorList>
            <consortium name="US DOE Joint Genome Institute"/>
            <person name="Copeland A."/>
            <person name="Lucas S."/>
            <person name="Lapidus A."/>
            <person name="Barry K."/>
            <person name="Glavina del Rio T."/>
            <person name="Dalin E."/>
            <person name="Tice H."/>
            <person name="Pitluck S."/>
            <person name="Saunders E."/>
            <person name="Brettin T."/>
            <person name="Bruce D."/>
            <person name="Detter J.C."/>
            <person name="Han C."/>
            <person name="Schmutz J."/>
            <person name="Larimer F."/>
            <person name="Land M."/>
            <person name="Hauser L."/>
            <person name="Kyrpides N."/>
            <person name="Kim E."/>
            <person name="Marx C."/>
            <person name="Richardson P."/>
        </authorList>
    </citation>
    <scope>NUCLEOTIDE SEQUENCE [LARGE SCALE GENOMIC DNA]</scope>
    <source>
        <strain>PA1</strain>
    </source>
</reference>
<feature type="chain" id="PRO_1000115883" description="Enolase">
    <location>
        <begin position="1"/>
        <end position="429"/>
    </location>
</feature>
<feature type="active site" description="Proton donor" evidence="1">
    <location>
        <position position="205"/>
    </location>
</feature>
<feature type="active site" description="Proton acceptor" evidence="1">
    <location>
        <position position="337"/>
    </location>
</feature>
<feature type="binding site" evidence="1">
    <location>
        <position position="163"/>
    </location>
    <ligand>
        <name>(2R)-2-phosphoglycerate</name>
        <dbReference type="ChEBI" id="CHEBI:58289"/>
    </ligand>
</feature>
<feature type="binding site" evidence="1">
    <location>
        <position position="242"/>
    </location>
    <ligand>
        <name>Mg(2+)</name>
        <dbReference type="ChEBI" id="CHEBI:18420"/>
    </ligand>
</feature>
<feature type="binding site" evidence="1">
    <location>
        <position position="285"/>
    </location>
    <ligand>
        <name>Mg(2+)</name>
        <dbReference type="ChEBI" id="CHEBI:18420"/>
    </ligand>
</feature>
<feature type="binding site" evidence="1">
    <location>
        <position position="312"/>
    </location>
    <ligand>
        <name>Mg(2+)</name>
        <dbReference type="ChEBI" id="CHEBI:18420"/>
    </ligand>
</feature>
<feature type="binding site" evidence="1">
    <location>
        <position position="337"/>
    </location>
    <ligand>
        <name>(2R)-2-phosphoglycerate</name>
        <dbReference type="ChEBI" id="CHEBI:58289"/>
    </ligand>
</feature>
<feature type="binding site" evidence="1">
    <location>
        <position position="366"/>
    </location>
    <ligand>
        <name>(2R)-2-phosphoglycerate</name>
        <dbReference type="ChEBI" id="CHEBI:58289"/>
    </ligand>
</feature>
<feature type="binding site" evidence="1">
    <location>
        <position position="367"/>
    </location>
    <ligand>
        <name>(2R)-2-phosphoglycerate</name>
        <dbReference type="ChEBI" id="CHEBI:58289"/>
    </ligand>
</feature>
<feature type="binding site" evidence="1">
    <location>
        <position position="388"/>
    </location>
    <ligand>
        <name>(2R)-2-phosphoglycerate</name>
        <dbReference type="ChEBI" id="CHEBI:58289"/>
    </ligand>
</feature>
<dbReference type="EC" id="4.2.1.11" evidence="1"/>
<dbReference type="EMBL" id="CP000908">
    <property type="protein sequence ID" value="ABY31175.1"/>
    <property type="molecule type" value="Genomic_DNA"/>
</dbReference>
<dbReference type="RefSeq" id="WP_003597464.1">
    <property type="nucleotide sequence ID" value="NC_010172.1"/>
</dbReference>
<dbReference type="SMR" id="A9W6G9"/>
<dbReference type="KEGG" id="mex:Mext_2784"/>
<dbReference type="eggNOG" id="COG0148">
    <property type="taxonomic scope" value="Bacteria"/>
</dbReference>
<dbReference type="HOGENOM" id="CLU_031223_2_1_5"/>
<dbReference type="BioCyc" id="MEXT419610:MEXT_RS14045-MONOMER"/>
<dbReference type="UniPathway" id="UPA00109">
    <property type="reaction ID" value="UER00187"/>
</dbReference>
<dbReference type="GO" id="GO:0009986">
    <property type="term" value="C:cell surface"/>
    <property type="evidence" value="ECO:0007669"/>
    <property type="project" value="UniProtKB-SubCell"/>
</dbReference>
<dbReference type="GO" id="GO:0005576">
    <property type="term" value="C:extracellular region"/>
    <property type="evidence" value="ECO:0007669"/>
    <property type="project" value="UniProtKB-SubCell"/>
</dbReference>
<dbReference type="GO" id="GO:0000015">
    <property type="term" value="C:phosphopyruvate hydratase complex"/>
    <property type="evidence" value="ECO:0007669"/>
    <property type="project" value="InterPro"/>
</dbReference>
<dbReference type="GO" id="GO:0000287">
    <property type="term" value="F:magnesium ion binding"/>
    <property type="evidence" value="ECO:0007669"/>
    <property type="project" value="UniProtKB-UniRule"/>
</dbReference>
<dbReference type="GO" id="GO:0004634">
    <property type="term" value="F:phosphopyruvate hydratase activity"/>
    <property type="evidence" value="ECO:0007669"/>
    <property type="project" value="UniProtKB-UniRule"/>
</dbReference>
<dbReference type="GO" id="GO:0006096">
    <property type="term" value="P:glycolytic process"/>
    <property type="evidence" value="ECO:0007669"/>
    <property type="project" value="UniProtKB-UniRule"/>
</dbReference>
<dbReference type="CDD" id="cd03313">
    <property type="entry name" value="enolase"/>
    <property type="match status" value="1"/>
</dbReference>
<dbReference type="FunFam" id="3.20.20.120:FF:000001">
    <property type="entry name" value="Enolase"/>
    <property type="match status" value="1"/>
</dbReference>
<dbReference type="FunFam" id="3.30.390.10:FF:000001">
    <property type="entry name" value="Enolase"/>
    <property type="match status" value="1"/>
</dbReference>
<dbReference type="Gene3D" id="3.20.20.120">
    <property type="entry name" value="Enolase-like C-terminal domain"/>
    <property type="match status" value="1"/>
</dbReference>
<dbReference type="Gene3D" id="3.30.390.10">
    <property type="entry name" value="Enolase-like, N-terminal domain"/>
    <property type="match status" value="1"/>
</dbReference>
<dbReference type="HAMAP" id="MF_00318">
    <property type="entry name" value="Enolase"/>
    <property type="match status" value="1"/>
</dbReference>
<dbReference type="InterPro" id="IPR000941">
    <property type="entry name" value="Enolase"/>
</dbReference>
<dbReference type="InterPro" id="IPR036849">
    <property type="entry name" value="Enolase-like_C_sf"/>
</dbReference>
<dbReference type="InterPro" id="IPR029017">
    <property type="entry name" value="Enolase-like_N"/>
</dbReference>
<dbReference type="InterPro" id="IPR020810">
    <property type="entry name" value="Enolase_C"/>
</dbReference>
<dbReference type="InterPro" id="IPR020809">
    <property type="entry name" value="Enolase_CS"/>
</dbReference>
<dbReference type="InterPro" id="IPR020811">
    <property type="entry name" value="Enolase_N"/>
</dbReference>
<dbReference type="NCBIfam" id="TIGR01060">
    <property type="entry name" value="eno"/>
    <property type="match status" value="1"/>
</dbReference>
<dbReference type="PANTHER" id="PTHR11902">
    <property type="entry name" value="ENOLASE"/>
    <property type="match status" value="1"/>
</dbReference>
<dbReference type="PANTHER" id="PTHR11902:SF1">
    <property type="entry name" value="ENOLASE"/>
    <property type="match status" value="1"/>
</dbReference>
<dbReference type="Pfam" id="PF00113">
    <property type="entry name" value="Enolase_C"/>
    <property type="match status" value="1"/>
</dbReference>
<dbReference type="Pfam" id="PF03952">
    <property type="entry name" value="Enolase_N"/>
    <property type="match status" value="1"/>
</dbReference>
<dbReference type="PIRSF" id="PIRSF001400">
    <property type="entry name" value="Enolase"/>
    <property type="match status" value="1"/>
</dbReference>
<dbReference type="PRINTS" id="PR00148">
    <property type="entry name" value="ENOLASE"/>
</dbReference>
<dbReference type="SFLD" id="SFLDS00001">
    <property type="entry name" value="Enolase"/>
    <property type="match status" value="1"/>
</dbReference>
<dbReference type="SFLD" id="SFLDF00002">
    <property type="entry name" value="enolase"/>
    <property type="match status" value="1"/>
</dbReference>
<dbReference type="SMART" id="SM01192">
    <property type="entry name" value="Enolase_C"/>
    <property type="match status" value="1"/>
</dbReference>
<dbReference type="SMART" id="SM01193">
    <property type="entry name" value="Enolase_N"/>
    <property type="match status" value="1"/>
</dbReference>
<dbReference type="SUPFAM" id="SSF51604">
    <property type="entry name" value="Enolase C-terminal domain-like"/>
    <property type="match status" value="1"/>
</dbReference>
<dbReference type="SUPFAM" id="SSF54826">
    <property type="entry name" value="Enolase N-terminal domain-like"/>
    <property type="match status" value="1"/>
</dbReference>
<dbReference type="PROSITE" id="PS00164">
    <property type="entry name" value="ENOLASE"/>
    <property type="match status" value="1"/>
</dbReference>
<name>ENO_METEP</name>
<gene>
    <name evidence="1" type="primary">eno</name>
    <name type="ordered locus">Mext_2784</name>
</gene>
<protein>
    <recommendedName>
        <fullName evidence="1">Enolase</fullName>
        <ecNumber evidence="1">4.2.1.11</ecNumber>
    </recommendedName>
    <alternativeName>
        <fullName evidence="1">2-phospho-D-glycerate hydro-lyase</fullName>
    </alternativeName>
    <alternativeName>
        <fullName evidence="1">2-phosphoglycerate dehydratase</fullName>
    </alternativeName>
</protein>
<accession>A9W6G9</accession>